<gene>
    <name evidence="1" type="primary">rpmA</name>
    <name evidence="1" type="synonym">rpl27</name>
    <name type="ordered locus">Syncc9605_2128</name>
</gene>
<accession>Q3AHR5</accession>
<keyword id="KW-0687">Ribonucleoprotein</keyword>
<keyword id="KW-0689">Ribosomal protein</keyword>
<name>RL27_SYNSC</name>
<reference key="1">
    <citation type="submission" date="2005-07" db="EMBL/GenBank/DDBJ databases">
        <title>Complete sequence of Synechococcus sp. CC9605.</title>
        <authorList>
            <consortium name="US DOE Joint Genome Institute"/>
            <person name="Copeland A."/>
            <person name="Lucas S."/>
            <person name="Lapidus A."/>
            <person name="Barry K."/>
            <person name="Detter J.C."/>
            <person name="Glavina T."/>
            <person name="Hammon N."/>
            <person name="Israni S."/>
            <person name="Pitluck S."/>
            <person name="Schmutz J."/>
            <person name="Martinez M."/>
            <person name="Larimer F."/>
            <person name="Land M."/>
            <person name="Kyrpides N."/>
            <person name="Ivanova N."/>
            <person name="Richardson P."/>
        </authorList>
    </citation>
    <scope>NUCLEOTIDE SEQUENCE [LARGE SCALE GENOMIC DNA]</scope>
    <source>
        <strain>CC9605</strain>
    </source>
</reference>
<sequence length="88" mass="9383">MAHKKGTGSTRNGRDSNAKRLGVKAYGGETVTAGSILIRQRGTSVLPGVNVGKGKDDTLFALTDGIVKFESIRRGLRNRKRINITATA</sequence>
<dbReference type="EMBL" id="CP000110">
    <property type="protein sequence ID" value="ABB35867.1"/>
    <property type="molecule type" value="Genomic_DNA"/>
</dbReference>
<dbReference type="RefSeq" id="WP_011365074.1">
    <property type="nucleotide sequence ID" value="NC_007516.1"/>
</dbReference>
<dbReference type="SMR" id="Q3AHR5"/>
<dbReference type="STRING" id="110662.Syncc9605_2128"/>
<dbReference type="KEGG" id="syd:Syncc9605_2128"/>
<dbReference type="eggNOG" id="COG0211">
    <property type="taxonomic scope" value="Bacteria"/>
</dbReference>
<dbReference type="HOGENOM" id="CLU_095424_4_0_3"/>
<dbReference type="OrthoDB" id="9803474at2"/>
<dbReference type="GO" id="GO:0022625">
    <property type="term" value="C:cytosolic large ribosomal subunit"/>
    <property type="evidence" value="ECO:0007669"/>
    <property type="project" value="TreeGrafter"/>
</dbReference>
<dbReference type="GO" id="GO:0003735">
    <property type="term" value="F:structural constituent of ribosome"/>
    <property type="evidence" value="ECO:0007669"/>
    <property type="project" value="InterPro"/>
</dbReference>
<dbReference type="GO" id="GO:0006412">
    <property type="term" value="P:translation"/>
    <property type="evidence" value="ECO:0007669"/>
    <property type="project" value="UniProtKB-UniRule"/>
</dbReference>
<dbReference type="FunFam" id="2.40.50.100:FF:000004">
    <property type="entry name" value="50S ribosomal protein L27"/>
    <property type="match status" value="1"/>
</dbReference>
<dbReference type="Gene3D" id="2.40.50.100">
    <property type="match status" value="1"/>
</dbReference>
<dbReference type="HAMAP" id="MF_00539">
    <property type="entry name" value="Ribosomal_bL27"/>
    <property type="match status" value="1"/>
</dbReference>
<dbReference type="InterPro" id="IPR001684">
    <property type="entry name" value="Ribosomal_bL27"/>
</dbReference>
<dbReference type="InterPro" id="IPR018261">
    <property type="entry name" value="Ribosomal_bL27_CS"/>
</dbReference>
<dbReference type="NCBIfam" id="TIGR00062">
    <property type="entry name" value="L27"/>
    <property type="match status" value="1"/>
</dbReference>
<dbReference type="PANTHER" id="PTHR15893:SF0">
    <property type="entry name" value="LARGE RIBOSOMAL SUBUNIT PROTEIN BL27M"/>
    <property type="match status" value="1"/>
</dbReference>
<dbReference type="PANTHER" id="PTHR15893">
    <property type="entry name" value="RIBOSOMAL PROTEIN L27"/>
    <property type="match status" value="1"/>
</dbReference>
<dbReference type="Pfam" id="PF01016">
    <property type="entry name" value="Ribosomal_L27"/>
    <property type="match status" value="1"/>
</dbReference>
<dbReference type="PRINTS" id="PR00063">
    <property type="entry name" value="RIBOSOMALL27"/>
</dbReference>
<dbReference type="SUPFAM" id="SSF110324">
    <property type="entry name" value="Ribosomal L27 protein-like"/>
    <property type="match status" value="1"/>
</dbReference>
<dbReference type="PROSITE" id="PS00831">
    <property type="entry name" value="RIBOSOMAL_L27"/>
    <property type="match status" value="1"/>
</dbReference>
<evidence type="ECO:0000255" key="1">
    <source>
        <dbReference type="HAMAP-Rule" id="MF_00539"/>
    </source>
</evidence>
<evidence type="ECO:0000256" key="2">
    <source>
        <dbReference type="SAM" id="MobiDB-lite"/>
    </source>
</evidence>
<evidence type="ECO:0000305" key="3"/>
<feature type="chain" id="PRO_1000017636" description="Large ribosomal subunit protein bL27">
    <location>
        <begin position="1"/>
        <end position="88"/>
    </location>
</feature>
<feature type="region of interest" description="Disordered" evidence="2">
    <location>
        <begin position="1"/>
        <end position="24"/>
    </location>
</feature>
<protein>
    <recommendedName>
        <fullName evidence="1">Large ribosomal subunit protein bL27</fullName>
    </recommendedName>
    <alternativeName>
        <fullName evidence="3">50S ribosomal protein L27</fullName>
    </alternativeName>
</protein>
<comment type="similarity">
    <text evidence="1">Belongs to the bacterial ribosomal protein bL27 family.</text>
</comment>
<organism>
    <name type="scientific">Synechococcus sp. (strain CC9605)</name>
    <dbReference type="NCBI Taxonomy" id="110662"/>
    <lineage>
        <taxon>Bacteria</taxon>
        <taxon>Bacillati</taxon>
        <taxon>Cyanobacteriota</taxon>
        <taxon>Cyanophyceae</taxon>
        <taxon>Synechococcales</taxon>
        <taxon>Synechococcaceae</taxon>
        <taxon>Synechococcus</taxon>
    </lineage>
</organism>
<proteinExistence type="inferred from homology"/>